<keyword id="KW-0997">Cell inner membrane</keyword>
<keyword id="KW-1003">Cell membrane</keyword>
<keyword id="KW-0133">Cell shape</keyword>
<keyword id="KW-0961">Cell wall biogenesis/degradation</keyword>
<keyword id="KW-0328">Glycosyltransferase</keyword>
<keyword id="KW-0472">Membrane</keyword>
<keyword id="KW-0573">Peptidoglycan synthesis</keyword>
<keyword id="KW-0808">Transferase</keyword>
<keyword id="KW-0812">Transmembrane</keyword>
<keyword id="KW-1133">Transmembrane helix</keyword>
<proteinExistence type="inferred from homology"/>
<feature type="chain" id="PRO_1000133603" description="Biosynthetic peptidoglycan transglycosylase">
    <location>
        <begin position="1"/>
        <end position="236"/>
    </location>
</feature>
<feature type="transmembrane region" description="Helical" evidence="1">
    <location>
        <begin position="17"/>
        <end position="37"/>
    </location>
</feature>
<accession>B3QBD2</accession>
<sequence length="236" mass="25785">MSDPVASAPRTKRVVRIVILVALALLALPYLLTILYGGGQPVSTLMLWRWATGAPVSRTWIDIENISPALPRSVVAAEDAKFCSHHGIDWDSVRDVIDDMQDGEASRGGSTITQQVAKNLFLWPGRSMIRKALEAPLALWIDFVLPKQRILEIYLNIAEWGPDGQFGAMAGADYAFGRSAAQLSAKEAATLAAILPNPRVRSAKAPGPGVRRLAATYVARARAAELRQCWRENRES</sequence>
<gene>
    <name evidence="1" type="primary">mtgA</name>
    <name type="ordered locus">Rpal_0526</name>
</gene>
<reference key="1">
    <citation type="submission" date="2008-05" db="EMBL/GenBank/DDBJ databases">
        <title>Complete sequence of Rhodopseudomonas palustris TIE-1.</title>
        <authorList>
            <consortium name="US DOE Joint Genome Institute"/>
            <person name="Lucas S."/>
            <person name="Copeland A."/>
            <person name="Lapidus A."/>
            <person name="Glavina del Rio T."/>
            <person name="Dalin E."/>
            <person name="Tice H."/>
            <person name="Pitluck S."/>
            <person name="Chain P."/>
            <person name="Malfatti S."/>
            <person name="Shin M."/>
            <person name="Vergez L."/>
            <person name="Lang D."/>
            <person name="Schmutz J."/>
            <person name="Larimer F."/>
            <person name="Land M."/>
            <person name="Hauser L."/>
            <person name="Kyrpides N."/>
            <person name="Mikhailova N."/>
            <person name="Emerson D."/>
            <person name="Newman D.K."/>
            <person name="Roden E."/>
            <person name="Richardson P."/>
        </authorList>
    </citation>
    <scope>NUCLEOTIDE SEQUENCE [LARGE SCALE GENOMIC DNA]</scope>
    <source>
        <strain>TIE-1</strain>
    </source>
</reference>
<evidence type="ECO:0000255" key="1">
    <source>
        <dbReference type="HAMAP-Rule" id="MF_00766"/>
    </source>
</evidence>
<protein>
    <recommendedName>
        <fullName evidence="1">Biosynthetic peptidoglycan transglycosylase</fullName>
        <ecNumber evidence="1">2.4.99.28</ecNumber>
    </recommendedName>
    <alternativeName>
        <fullName evidence="1">Glycan polymerase</fullName>
    </alternativeName>
    <alternativeName>
        <fullName evidence="1">Peptidoglycan glycosyltransferase MtgA</fullName>
        <shortName evidence="1">PGT</shortName>
    </alternativeName>
</protein>
<comment type="function">
    <text evidence="1">Peptidoglycan polymerase that catalyzes glycan chain elongation from lipid-linked precursors.</text>
</comment>
<comment type="catalytic activity">
    <reaction evidence="1">
        <text>[GlcNAc-(1-&gt;4)-Mur2Ac(oyl-L-Ala-gamma-D-Glu-L-Lys-D-Ala-D-Ala)](n)-di-trans,octa-cis-undecaprenyl diphosphate + beta-D-GlcNAc-(1-&gt;4)-Mur2Ac(oyl-L-Ala-gamma-D-Glu-L-Lys-D-Ala-D-Ala)-di-trans,octa-cis-undecaprenyl diphosphate = [GlcNAc-(1-&gt;4)-Mur2Ac(oyl-L-Ala-gamma-D-Glu-L-Lys-D-Ala-D-Ala)](n+1)-di-trans,octa-cis-undecaprenyl diphosphate + di-trans,octa-cis-undecaprenyl diphosphate + H(+)</text>
        <dbReference type="Rhea" id="RHEA:23708"/>
        <dbReference type="Rhea" id="RHEA-COMP:9602"/>
        <dbReference type="Rhea" id="RHEA-COMP:9603"/>
        <dbReference type="ChEBI" id="CHEBI:15378"/>
        <dbReference type="ChEBI" id="CHEBI:58405"/>
        <dbReference type="ChEBI" id="CHEBI:60033"/>
        <dbReference type="ChEBI" id="CHEBI:78435"/>
        <dbReference type="EC" id="2.4.99.28"/>
    </reaction>
</comment>
<comment type="pathway">
    <text evidence="1">Cell wall biogenesis; peptidoglycan biosynthesis.</text>
</comment>
<comment type="subcellular location">
    <subcellularLocation>
        <location evidence="1">Cell inner membrane</location>
        <topology evidence="1">Single-pass membrane protein</topology>
    </subcellularLocation>
</comment>
<comment type="similarity">
    <text evidence="1">Belongs to the glycosyltransferase 51 family.</text>
</comment>
<dbReference type="EC" id="2.4.99.28" evidence="1"/>
<dbReference type="EMBL" id="CP001096">
    <property type="protein sequence ID" value="ACE99085.1"/>
    <property type="molecule type" value="Genomic_DNA"/>
</dbReference>
<dbReference type="RefSeq" id="WP_011156093.1">
    <property type="nucleotide sequence ID" value="NC_011004.1"/>
</dbReference>
<dbReference type="SMR" id="B3QBD2"/>
<dbReference type="CAZy" id="GT51">
    <property type="family name" value="Glycosyltransferase Family 51"/>
</dbReference>
<dbReference type="GeneID" id="66891543"/>
<dbReference type="KEGG" id="rpt:Rpal_0526"/>
<dbReference type="HOGENOM" id="CLU_006354_1_1_5"/>
<dbReference type="OrthoDB" id="9766909at2"/>
<dbReference type="UniPathway" id="UPA00219"/>
<dbReference type="Proteomes" id="UP000001725">
    <property type="component" value="Chromosome"/>
</dbReference>
<dbReference type="GO" id="GO:0009274">
    <property type="term" value="C:peptidoglycan-based cell wall"/>
    <property type="evidence" value="ECO:0007669"/>
    <property type="project" value="InterPro"/>
</dbReference>
<dbReference type="GO" id="GO:0005886">
    <property type="term" value="C:plasma membrane"/>
    <property type="evidence" value="ECO:0007669"/>
    <property type="project" value="UniProtKB-SubCell"/>
</dbReference>
<dbReference type="GO" id="GO:0016763">
    <property type="term" value="F:pentosyltransferase activity"/>
    <property type="evidence" value="ECO:0007669"/>
    <property type="project" value="InterPro"/>
</dbReference>
<dbReference type="GO" id="GO:0008955">
    <property type="term" value="F:peptidoglycan glycosyltransferase activity"/>
    <property type="evidence" value="ECO:0007669"/>
    <property type="project" value="UniProtKB-UniRule"/>
</dbReference>
<dbReference type="GO" id="GO:0071555">
    <property type="term" value="P:cell wall organization"/>
    <property type="evidence" value="ECO:0007669"/>
    <property type="project" value="UniProtKB-KW"/>
</dbReference>
<dbReference type="GO" id="GO:0009252">
    <property type="term" value="P:peptidoglycan biosynthetic process"/>
    <property type="evidence" value="ECO:0007669"/>
    <property type="project" value="UniProtKB-UniRule"/>
</dbReference>
<dbReference type="GO" id="GO:0008360">
    <property type="term" value="P:regulation of cell shape"/>
    <property type="evidence" value="ECO:0007669"/>
    <property type="project" value="UniProtKB-KW"/>
</dbReference>
<dbReference type="Gene3D" id="1.10.3810.10">
    <property type="entry name" value="Biosynthetic peptidoglycan transglycosylase-like"/>
    <property type="match status" value="1"/>
</dbReference>
<dbReference type="HAMAP" id="MF_00766">
    <property type="entry name" value="PGT_MtgA"/>
    <property type="match status" value="1"/>
</dbReference>
<dbReference type="InterPro" id="IPR001264">
    <property type="entry name" value="Glyco_trans_51"/>
</dbReference>
<dbReference type="InterPro" id="IPR023346">
    <property type="entry name" value="Lysozyme-like_dom_sf"/>
</dbReference>
<dbReference type="InterPro" id="IPR036950">
    <property type="entry name" value="PBP_transglycosylase"/>
</dbReference>
<dbReference type="InterPro" id="IPR011812">
    <property type="entry name" value="Pep_trsgly"/>
</dbReference>
<dbReference type="NCBIfam" id="TIGR02070">
    <property type="entry name" value="mono_pep_trsgly"/>
    <property type="match status" value="1"/>
</dbReference>
<dbReference type="PANTHER" id="PTHR30400:SF0">
    <property type="entry name" value="BIOSYNTHETIC PEPTIDOGLYCAN TRANSGLYCOSYLASE"/>
    <property type="match status" value="1"/>
</dbReference>
<dbReference type="PANTHER" id="PTHR30400">
    <property type="entry name" value="MONOFUNCTIONAL BIOSYNTHETIC PEPTIDOGLYCAN TRANSGLYCOSYLASE"/>
    <property type="match status" value="1"/>
</dbReference>
<dbReference type="Pfam" id="PF00912">
    <property type="entry name" value="Transgly"/>
    <property type="match status" value="1"/>
</dbReference>
<dbReference type="SUPFAM" id="SSF53955">
    <property type="entry name" value="Lysozyme-like"/>
    <property type="match status" value="1"/>
</dbReference>
<name>MTGA_RHOPT</name>
<organism>
    <name type="scientific">Rhodopseudomonas palustris (strain TIE-1)</name>
    <dbReference type="NCBI Taxonomy" id="395960"/>
    <lineage>
        <taxon>Bacteria</taxon>
        <taxon>Pseudomonadati</taxon>
        <taxon>Pseudomonadota</taxon>
        <taxon>Alphaproteobacteria</taxon>
        <taxon>Hyphomicrobiales</taxon>
        <taxon>Nitrobacteraceae</taxon>
        <taxon>Rhodopseudomonas</taxon>
    </lineage>
</organism>